<reference key="1">
    <citation type="journal article" date="2009" name="J. Bacteriol.">
        <title>Genomic sequencing reveals regulatory mutations and recombinational events in the widely used MC4100 lineage of Escherichia coli K-12.</title>
        <authorList>
            <person name="Ferenci T."/>
            <person name="Zhou Z."/>
            <person name="Betteridge T."/>
            <person name="Ren Y."/>
            <person name="Liu Y."/>
            <person name="Feng L."/>
            <person name="Reeves P.R."/>
            <person name="Wang L."/>
        </authorList>
    </citation>
    <scope>NUCLEOTIDE SEQUENCE [LARGE SCALE GENOMIC DNA]</scope>
    <source>
        <strain>K12 / MC4100 / BW2952</strain>
    </source>
</reference>
<organism>
    <name type="scientific">Escherichia coli (strain K12 / MC4100 / BW2952)</name>
    <dbReference type="NCBI Taxonomy" id="595496"/>
    <lineage>
        <taxon>Bacteria</taxon>
        <taxon>Pseudomonadati</taxon>
        <taxon>Pseudomonadota</taxon>
        <taxon>Gammaproteobacteria</taxon>
        <taxon>Enterobacterales</taxon>
        <taxon>Enterobacteriaceae</taxon>
        <taxon>Escherichia</taxon>
    </lineage>
</organism>
<feature type="chain" id="PRO_1000215402" description="HTH-type transcriptional activator RhaR">
    <location>
        <begin position="1"/>
        <end position="282"/>
    </location>
</feature>
<feature type="domain" description="HTH araC/xylS-type" evidence="1">
    <location>
        <begin position="179"/>
        <end position="277"/>
    </location>
</feature>
<feature type="DNA-binding region" description="H-T-H motif" evidence="1">
    <location>
        <begin position="196"/>
        <end position="217"/>
    </location>
</feature>
<feature type="DNA-binding region" description="H-T-H motif" evidence="1">
    <location>
        <begin position="244"/>
        <end position="267"/>
    </location>
</feature>
<feature type="site" description="Interaction with sigma-70" evidence="1">
    <location>
        <position position="246"/>
    </location>
</feature>
<name>RHAR_ECOBW</name>
<keyword id="KW-0010">Activator</keyword>
<keyword id="KW-0963">Cytoplasm</keyword>
<keyword id="KW-0238">DNA-binding</keyword>
<keyword id="KW-0677">Repeat</keyword>
<keyword id="KW-0684">Rhamnose metabolism</keyword>
<keyword id="KW-0804">Transcription</keyword>
<keyword id="KW-0805">Transcription regulation</keyword>
<comment type="function">
    <text evidence="1">Activates expression of the rhaSR operon in response to L-rhamnose.</text>
</comment>
<comment type="subunit">
    <text evidence="1">Binds DNA as a dimer.</text>
</comment>
<comment type="subcellular location">
    <subcellularLocation>
        <location evidence="1">Cytoplasm</location>
    </subcellularLocation>
</comment>
<evidence type="ECO:0000255" key="1">
    <source>
        <dbReference type="HAMAP-Rule" id="MF_01533"/>
    </source>
</evidence>
<sequence length="282" mass="32373">MAHQLKLLKDDFFASDQQAVAVADRYPQDVFAEHTHDFCELVIVWRGNGLHVLNDRPYRITRGDLFYIHADDKHSYASVNDLVLQNIIYCPERLKLNLDWQGAIPGFNASAGQPHWRLGSMGMAQARQVIGQLEHESSQHVPFANEMAELLFGQLVMLLNRHRYTSDSLPPTSSETLLDKLITRLAASLKSPFALDKFCDEASCSERVLRQQFRQQTGMTINQYLRQVRVCHAQYLLQHSRLLISDISTECGFEDSNYFSVVFTRETGMTPSQWRHLNSQKD</sequence>
<proteinExistence type="inferred from homology"/>
<gene>
    <name evidence="1" type="primary">rhaR</name>
    <name type="ordered locus">BWG_3576</name>
</gene>
<dbReference type="EMBL" id="CP001396">
    <property type="protein sequence ID" value="ACR62908.1"/>
    <property type="molecule type" value="Genomic_DNA"/>
</dbReference>
<dbReference type="RefSeq" id="WP_001336056.1">
    <property type="nucleotide sequence ID" value="NC_012759.1"/>
</dbReference>
<dbReference type="SMR" id="C5A074"/>
<dbReference type="KEGG" id="ebw:BWG_3576"/>
<dbReference type="HOGENOM" id="CLU_000445_88_5_6"/>
<dbReference type="GO" id="GO:0005737">
    <property type="term" value="C:cytoplasm"/>
    <property type="evidence" value="ECO:0007669"/>
    <property type="project" value="UniProtKB-SubCell"/>
</dbReference>
<dbReference type="GO" id="GO:0003700">
    <property type="term" value="F:DNA-binding transcription factor activity"/>
    <property type="evidence" value="ECO:0007669"/>
    <property type="project" value="UniProtKB-UniRule"/>
</dbReference>
<dbReference type="GO" id="GO:0043565">
    <property type="term" value="F:sequence-specific DNA binding"/>
    <property type="evidence" value="ECO:0007669"/>
    <property type="project" value="InterPro"/>
</dbReference>
<dbReference type="GO" id="GO:0045893">
    <property type="term" value="P:positive regulation of DNA-templated transcription"/>
    <property type="evidence" value="ECO:0007669"/>
    <property type="project" value="UniProtKB-UniRule"/>
</dbReference>
<dbReference type="GO" id="GO:0019299">
    <property type="term" value="P:rhamnose metabolic process"/>
    <property type="evidence" value="ECO:0007669"/>
    <property type="project" value="UniProtKB-UniRule"/>
</dbReference>
<dbReference type="CDD" id="cd06977">
    <property type="entry name" value="cupin_RhaR_RhaS-like_N"/>
    <property type="match status" value="1"/>
</dbReference>
<dbReference type="Gene3D" id="1.10.10.60">
    <property type="entry name" value="Homeodomain-like"/>
    <property type="match status" value="2"/>
</dbReference>
<dbReference type="Gene3D" id="2.60.120.10">
    <property type="entry name" value="Jelly Rolls"/>
    <property type="match status" value="1"/>
</dbReference>
<dbReference type="HAMAP" id="MF_01533">
    <property type="entry name" value="HTH_type_RhaR"/>
    <property type="match status" value="1"/>
</dbReference>
<dbReference type="InterPro" id="IPR003313">
    <property type="entry name" value="AraC-bd"/>
</dbReference>
<dbReference type="InterPro" id="IPR009057">
    <property type="entry name" value="Homeodomain-like_sf"/>
</dbReference>
<dbReference type="InterPro" id="IPR018060">
    <property type="entry name" value="HTH_AraC"/>
</dbReference>
<dbReference type="InterPro" id="IPR018062">
    <property type="entry name" value="HTH_AraC-typ_CS"/>
</dbReference>
<dbReference type="InterPro" id="IPR047220">
    <property type="entry name" value="RhaR_RhaS-like_N"/>
</dbReference>
<dbReference type="InterPro" id="IPR014710">
    <property type="entry name" value="RmlC-like_jellyroll"/>
</dbReference>
<dbReference type="InterPro" id="IPR011051">
    <property type="entry name" value="RmlC_Cupin_sf"/>
</dbReference>
<dbReference type="InterPro" id="IPR023699">
    <property type="entry name" value="Tscrpt_act_RhaR"/>
</dbReference>
<dbReference type="InterPro" id="IPR020449">
    <property type="entry name" value="Tscrpt_reg_AraC-type_HTH"/>
</dbReference>
<dbReference type="NCBIfam" id="NF010025">
    <property type="entry name" value="PRK13500.1"/>
    <property type="match status" value="1"/>
</dbReference>
<dbReference type="NCBIfam" id="NF010026">
    <property type="entry name" value="PRK13501.1"/>
    <property type="match status" value="1"/>
</dbReference>
<dbReference type="NCBIfam" id="NF010027">
    <property type="entry name" value="PRK13502.1"/>
    <property type="match status" value="1"/>
</dbReference>
<dbReference type="PANTHER" id="PTHR43280">
    <property type="entry name" value="ARAC-FAMILY TRANSCRIPTIONAL REGULATOR"/>
    <property type="match status" value="1"/>
</dbReference>
<dbReference type="PANTHER" id="PTHR43280:SF13">
    <property type="entry name" value="HTH-TYPE TRANSCRIPTIONAL ACTIVATOR RHAR"/>
    <property type="match status" value="1"/>
</dbReference>
<dbReference type="Pfam" id="PF02311">
    <property type="entry name" value="AraC_binding"/>
    <property type="match status" value="1"/>
</dbReference>
<dbReference type="Pfam" id="PF12833">
    <property type="entry name" value="HTH_18"/>
    <property type="match status" value="1"/>
</dbReference>
<dbReference type="PRINTS" id="PR00032">
    <property type="entry name" value="HTHARAC"/>
</dbReference>
<dbReference type="SMART" id="SM00342">
    <property type="entry name" value="HTH_ARAC"/>
    <property type="match status" value="1"/>
</dbReference>
<dbReference type="SUPFAM" id="SSF46689">
    <property type="entry name" value="Homeodomain-like"/>
    <property type="match status" value="2"/>
</dbReference>
<dbReference type="SUPFAM" id="SSF51182">
    <property type="entry name" value="RmlC-like cupins"/>
    <property type="match status" value="1"/>
</dbReference>
<dbReference type="PROSITE" id="PS00041">
    <property type="entry name" value="HTH_ARAC_FAMILY_1"/>
    <property type="match status" value="1"/>
</dbReference>
<dbReference type="PROSITE" id="PS01124">
    <property type="entry name" value="HTH_ARAC_FAMILY_2"/>
    <property type="match status" value="1"/>
</dbReference>
<protein>
    <recommendedName>
        <fullName evidence="1">HTH-type transcriptional activator RhaR</fullName>
    </recommendedName>
    <alternativeName>
        <fullName evidence="1">L-rhamnose operon transcriptional activator RhaR</fullName>
    </alternativeName>
</protein>
<accession>C5A074</accession>